<organism>
    <name type="scientific">Clostridium novyi (strain NT)</name>
    <dbReference type="NCBI Taxonomy" id="386415"/>
    <lineage>
        <taxon>Bacteria</taxon>
        <taxon>Bacillati</taxon>
        <taxon>Bacillota</taxon>
        <taxon>Clostridia</taxon>
        <taxon>Eubacteriales</taxon>
        <taxon>Clostridiaceae</taxon>
        <taxon>Clostridium</taxon>
    </lineage>
</organism>
<keyword id="KW-0378">Hydrolase</keyword>
<keyword id="KW-0479">Metal-binding</keyword>
<keyword id="KW-1185">Reference proteome</keyword>
<keyword id="KW-0862">Zinc</keyword>
<reference key="1">
    <citation type="journal article" date="2006" name="Nat. Biotechnol.">
        <title>The genome and transcriptomes of the anti-tumor agent Clostridium novyi-NT.</title>
        <authorList>
            <person name="Bettegowda C."/>
            <person name="Huang X."/>
            <person name="Lin J."/>
            <person name="Cheong I."/>
            <person name="Kohli M."/>
            <person name="Szabo S.A."/>
            <person name="Zhang X."/>
            <person name="Diaz L.A. Jr."/>
            <person name="Velculescu V.E."/>
            <person name="Parmigiani G."/>
            <person name="Kinzler K.W."/>
            <person name="Vogelstein B."/>
            <person name="Zhou S."/>
        </authorList>
    </citation>
    <scope>NUCLEOTIDE SEQUENCE [LARGE SCALE GENOMIC DNA]</scope>
    <source>
        <strain>NT</strain>
    </source>
</reference>
<sequence>MKYVLDVHTHTVASGHAYTTLLENAKYASEIGLKVLGTTEHGPKMPHAPHIWYFYNYKVLPRKIYGVTMLHGCEVNVVDYKGNLDLPEDIVKDLDIVIASLHEPCVTPGTIEENTAAILNVMDNPYVDIIGHPGNPAYPINAEEVVKKAKEKNILIEINNSSFKTSRIGSVPNCTEIVKLCKKHGVNIILGSDSHVCFTIGNFDKIQEILDSIDMPKELIINTDEKKLLTYLKSKGKLKDLVID</sequence>
<protein>
    <recommendedName>
        <fullName evidence="1">Probable phosphatase NT01CX_1282</fullName>
        <ecNumber evidence="1">3.1.3.-</ecNumber>
    </recommendedName>
</protein>
<accession>A0PYB3</accession>
<dbReference type="EC" id="3.1.3.-" evidence="1"/>
<dbReference type="EMBL" id="CP000382">
    <property type="protein sequence ID" value="ABK61350.1"/>
    <property type="molecule type" value="Genomic_DNA"/>
</dbReference>
<dbReference type="RefSeq" id="WP_011721373.1">
    <property type="nucleotide sequence ID" value="NC_008593.1"/>
</dbReference>
<dbReference type="SMR" id="A0PYB3"/>
<dbReference type="STRING" id="386415.NT01CX_1282"/>
<dbReference type="KEGG" id="cno:NT01CX_1282"/>
<dbReference type="eggNOG" id="COG1387">
    <property type="taxonomic scope" value="Bacteria"/>
</dbReference>
<dbReference type="HOGENOM" id="CLU_061999_0_1_9"/>
<dbReference type="Proteomes" id="UP000008220">
    <property type="component" value="Chromosome"/>
</dbReference>
<dbReference type="GO" id="GO:0005829">
    <property type="term" value="C:cytosol"/>
    <property type="evidence" value="ECO:0007669"/>
    <property type="project" value="TreeGrafter"/>
</dbReference>
<dbReference type="GO" id="GO:0016791">
    <property type="term" value="F:phosphatase activity"/>
    <property type="evidence" value="ECO:0007669"/>
    <property type="project" value="UniProtKB-UniRule"/>
</dbReference>
<dbReference type="GO" id="GO:0008270">
    <property type="term" value="F:zinc ion binding"/>
    <property type="evidence" value="ECO:0007669"/>
    <property type="project" value="UniProtKB-UniRule"/>
</dbReference>
<dbReference type="CDD" id="cd07437">
    <property type="entry name" value="PHP_HisPPase_Ycdx_like"/>
    <property type="match status" value="1"/>
</dbReference>
<dbReference type="Gene3D" id="3.20.20.140">
    <property type="entry name" value="Metal-dependent hydrolases"/>
    <property type="match status" value="1"/>
</dbReference>
<dbReference type="HAMAP" id="MF_01561">
    <property type="entry name" value="YcdX_phosphat"/>
    <property type="match status" value="1"/>
</dbReference>
<dbReference type="InterPro" id="IPR023710">
    <property type="entry name" value="Phosphatase_YcdX_put"/>
</dbReference>
<dbReference type="InterPro" id="IPR050243">
    <property type="entry name" value="PHP_phosphatase"/>
</dbReference>
<dbReference type="InterPro" id="IPR003141">
    <property type="entry name" value="Pol/His_phosphatase_N"/>
</dbReference>
<dbReference type="InterPro" id="IPR016195">
    <property type="entry name" value="Pol/histidinol_Pase-like"/>
</dbReference>
<dbReference type="NCBIfam" id="NF006702">
    <property type="entry name" value="PRK09248.1"/>
    <property type="match status" value="1"/>
</dbReference>
<dbReference type="PANTHER" id="PTHR36928">
    <property type="entry name" value="PHOSPHATASE YCDX-RELATED"/>
    <property type="match status" value="1"/>
</dbReference>
<dbReference type="PANTHER" id="PTHR36928:SF1">
    <property type="entry name" value="PHOSPHATASE YCDX-RELATED"/>
    <property type="match status" value="1"/>
</dbReference>
<dbReference type="SMART" id="SM00481">
    <property type="entry name" value="POLIIIAc"/>
    <property type="match status" value="1"/>
</dbReference>
<dbReference type="SUPFAM" id="SSF89550">
    <property type="entry name" value="PHP domain-like"/>
    <property type="match status" value="1"/>
</dbReference>
<comment type="cofactor">
    <cofactor evidence="1">
        <name>Zn(2+)</name>
        <dbReference type="ChEBI" id="CHEBI:29105"/>
    </cofactor>
    <text evidence="1">Binds 3 Zn(2+) ions per subunit.</text>
</comment>
<comment type="similarity">
    <text evidence="1">Belongs to the PHP family.</text>
</comment>
<name>Y1282_CLONN</name>
<evidence type="ECO:0000255" key="1">
    <source>
        <dbReference type="HAMAP-Rule" id="MF_01561"/>
    </source>
</evidence>
<gene>
    <name type="ordered locus">NT01CX_1282</name>
</gene>
<proteinExistence type="inferred from homology"/>
<feature type="chain" id="PRO_1000069015" description="Probable phosphatase NT01CX_1282">
    <location>
        <begin position="1"/>
        <end position="244"/>
    </location>
</feature>
<feature type="binding site" evidence="1">
    <location>
        <position position="8"/>
    </location>
    <ligand>
        <name>Zn(2+)</name>
        <dbReference type="ChEBI" id="CHEBI:29105"/>
        <label>1</label>
    </ligand>
</feature>
<feature type="binding site" evidence="1">
    <location>
        <position position="10"/>
    </location>
    <ligand>
        <name>Zn(2+)</name>
        <dbReference type="ChEBI" id="CHEBI:29105"/>
        <label>1</label>
    </ligand>
</feature>
<feature type="binding site" evidence="1">
    <location>
        <position position="16"/>
    </location>
    <ligand>
        <name>Zn(2+)</name>
        <dbReference type="ChEBI" id="CHEBI:29105"/>
        <label>2</label>
    </ligand>
</feature>
<feature type="binding site" evidence="1">
    <location>
        <position position="41"/>
    </location>
    <ligand>
        <name>Zn(2+)</name>
        <dbReference type="ChEBI" id="CHEBI:29105"/>
        <label>2</label>
    </ligand>
</feature>
<feature type="binding site" evidence="1">
    <location>
        <position position="74"/>
    </location>
    <ligand>
        <name>Zn(2+)</name>
        <dbReference type="ChEBI" id="CHEBI:29105"/>
        <label>1</label>
    </ligand>
</feature>
<feature type="binding site" evidence="1">
    <location>
        <position position="74"/>
    </location>
    <ligand>
        <name>Zn(2+)</name>
        <dbReference type="ChEBI" id="CHEBI:29105"/>
        <label>3</label>
    </ligand>
</feature>
<feature type="binding site" evidence="1">
    <location>
        <position position="102"/>
    </location>
    <ligand>
        <name>Zn(2+)</name>
        <dbReference type="ChEBI" id="CHEBI:29105"/>
        <label>3</label>
    </ligand>
</feature>
<feature type="binding site" evidence="1">
    <location>
        <position position="132"/>
    </location>
    <ligand>
        <name>Zn(2+)</name>
        <dbReference type="ChEBI" id="CHEBI:29105"/>
        <label>3</label>
    </ligand>
</feature>
<feature type="binding site" evidence="1">
    <location>
        <position position="193"/>
    </location>
    <ligand>
        <name>Zn(2+)</name>
        <dbReference type="ChEBI" id="CHEBI:29105"/>
        <label>1</label>
    </ligand>
</feature>
<feature type="binding site" evidence="1">
    <location>
        <position position="195"/>
    </location>
    <ligand>
        <name>Zn(2+)</name>
        <dbReference type="ChEBI" id="CHEBI:29105"/>
        <label>2</label>
    </ligand>
</feature>